<dbReference type="EC" id="3.4.13.22" evidence="1"/>
<dbReference type="EMBL" id="U00096">
    <property type="protein sequence ID" value="AAC74561.1"/>
    <property type="molecule type" value="Genomic_DNA"/>
</dbReference>
<dbReference type="EMBL" id="AP009048">
    <property type="protein sequence ID" value="BAA15143.1"/>
    <property type="molecule type" value="Genomic_DNA"/>
</dbReference>
<dbReference type="PIR" id="C64902">
    <property type="entry name" value="C64902"/>
</dbReference>
<dbReference type="RefSeq" id="NP_416005.1">
    <property type="nucleotide sequence ID" value="NC_000913.3"/>
</dbReference>
<dbReference type="RefSeq" id="WP_001285833.1">
    <property type="nucleotide sequence ID" value="NZ_SSZK01000038.1"/>
</dbReference>
<dbReference type="SMR" id="P77790"/>
<dbReference type="BioGRID" id="4259362">
    <property type="interactions" value="255"/>
</dbReference>
<dbReference type="DIP" id="DIP-9418N"/>
<dbReference type="FunCoup" id="P77790">
    <property type="interactions" value="181"/>
</dbReference>
<dbReference type="STRING" id="511145.b1488"/>
<dbReference type="PaxDb" id="511145-b1488"/>
<dbReference type="EnsemblBacteria" id="AAC74561">
    <property type="protein sequence ID" value="AAC74561"/>
    <property type="gene ID" value="b1488"/>
</dbReference>
<dbReference type="GeneID" id="93775647"/>
<dbReference type="GeneID" id="945532"/>
<dbReference type="KEGG" id="ecj:JW1483"/>
<dbReference type="KEGG" id="eco:b1488"/>
<dbReference type="KEGG" id="ecoc:C3026_08620"/>
<dbReference type="PATRIC" id="fig|1411691.4.peg.779"/>
<dbReference type="EchoBASE" id="EB3552"/>
<dbReference type="eggNOG" id="COG2173">
    <property type="taxonomic scope" value="Bacteria"/>
</dbReference>
<dbReference type="HOGENOM" id="CLU_060744_1_2_6"/>
<dbReference type="InParanoid" id="P77790"/>
<dbReference type="OMA" id="LFDCYRP"/>
<dbReference type="OrthoDB" id="9801430at2"/>
<dbReference type="PhylomeDB" id="P77790"/>
<dbReference type="BioCyc" id="EcoCyc:G6782-MONOMER"/>
<dbReference type="BioCyc" id="MetaCyc:G6782-MONOMER"/>
<dbReference type="PRO" id="PR:P77790"/>
<dbReference type="Proteomes" id="UP000000625">
    <property type="component" value="Chromosome"/>
</dbReference>
<dbReference type="GO" id="GO:0005737">
    <property type="term" value="C:cytoplasm"/>
    <property type="evidence" value="ECO:0007669"/>
    <property type="project" value="UniProtKB-SubCell"/>
</dbReference>
<dbReference type="GO" id="GO:0160237">
    <property type="term" value="F:D-Ala-D-Ala dipeptidase activity"/>
    <property type="evidence" value="ECO:0007669"/>
    <property type="project" value="UniProtKB-EC"/>
</dbReference>
<dbReference type="GO" id="GO:0009046">
    <property type="term" value="F:zinc D-Ala-D-Ala carboxypeptidase activity"/>
    <property type="evidence" value="ECO:0000314"/>
    <property type="project" value="EcoCyc"/>
</dbReference>
<dbReference type="GO" id="GO:0008270">
    <property type="term" value="F:zinc ion binding"/>
    <property type="evidence" value="ECO:0007669"/>
    <property type="project" value="UniProtKB-UniRule"/>
</dbReference>
<dbReference type="GO" id="GO:0071555">
    <property type="term" value="P:cell wall organization"/>
    <property type="evidence" value="ECO:0007669"/>
    <property type="project" value="UniProtKB-KW"/>
</dbReference>
<dbReference type="GO" id="GO:0006508">
    <property type="term" value="P:proteolysis"/>
    <property type="evidence" value="ECO:0007669"/>
    <property type="project" value="UniProtKB-KW"/>
</dbReference>
<dbReference type="GO" id="GO:0042594">
    <property type="term" value="P:response to starvation"/>
    <property type="evidence" value="ECO:0000304"/>
    <property type="project" value="EcoCyc"/>
</dbReference>
<dbReference type="CDD" id="cd14840">
    <property type="entry name" value="D-Ala-D-Ala_dipeptidase_Aad"/>
    <property type="match status" value="1"/>
</dbReference>
<dbReference type="FunFam" id="3.30.1380.10:FF:000003">
    <property type="entry name" value="D-alanyl-D-alanine dipeptidase"/>
    <property type="match status" value="1"/>
</dbReference>
<dbReference type="Gene3D" id="3.30.1380.10">
    <property type="match status" value="1"/>
</dbReference>
<dbReference type="HAMAP" id="MF_01924">
    <property type="entry name" value="A_A_dipeptidase"/>
    <property type="match status" value="1"/>
</dbReference>
<dbReference type="InterPro" id="IPR000755">
    <property type="entry name" value="A_A_dipeptidase"/>
</dbReference>
<dbReference type="InterPro" id="IPR009045">
    <property type="entry name" value="Hedgehog_sig/DD-Pept_Zn-bd_sf"/>
</dbReference>
<dbReference type="NCBIfam" id="NF007557">
    <property type="entry name" value="PRK10178.1"/>
    <property type="match status" value="1"/>
</dbReference>
<dbReference type="PANTHER" id="PTHR43126">
    <property type="entry name" value="D-ALANYL-D-ALANINE DIPEPTIDASE"/>
    <property type="match status" value="1"/>
</dbReference>
<dbReference type="PANTHER" id="PTHR43126:SF1">
    <property type="entry name" value="D-ALANYL-D-ALANINE DIPEPTIDASE"/>
    <property type="match status" value="1"/>
</dbReference>
<dbReference type="Pfam" id="PF01427">
    <property type="entry name" value="Peptidase_M15"/>
    <property type="match status" value="1"/>
</dbReference>
<dbReference type="PIRSF" id="PIRSF026671">
    <property type="entry name" value="AA_dipeptidase"/>
    <property type="match status" value="1"/>
</dbReference>
<dbReference type="SUPFAM" id="SSF55166">
    <property type="entry name" value="Hedgehog/DD-peptidase"/>
    <property type="match status" value="1"/>
</dbReference>
<feature type="chain" id="PRO_0000217837" description="D-alanyl-D-alanine dipeptidase">
    <location>
        <begin position="1"/>
        <end position="193"/>
    </location>
</feature>
<feature type="active site" description="Proton donor/acceptor" evidence="1">
    <location>
        <position position="162"/>
    </location>
</feature>
<feature type="binding site" evidence="1">
    <location>
        <position position="98"/>
    </location>
    <ligand>
        <name>Zn(2+)</name>
        <dbReference type="ChEBI" id="CHEBI:29105"/>
        <note>catalytic</note>
    </ligand>
</feature>
<feature type="binding site" evidence="1">
    <location>
        <position position="105"/>
    </location>
    <ligand>
        <name>Zn(2+)</name>
        <dbReference type="ChEBI" id="CHEBI:29105"/>
        <note>catalytic</note>
    </ligand>
</feature>
<feature type="binding site" evidence="1">
    <location>
        <position position="165"/>
    </location>
    <ligand>
        <name>Zn(2+)</name>
        <dbReference type="ChEBI" id="CHEBI:29105"/>
        <note>catalytic</note>
    </ligand>
</feature>
<feature type="site" description="Transition state stabilizer" evidence="1">
    <location>
        <position position="71"/>
    </location>
</feature>
<comment type="function">
    <text evidence="1 2">Catalyzes hydrolysis of the D-alanyl-D-alanine dipeptide. May have a role in cell-wall turnover.</text>
</comment>
<comment type="catalytic activity">
    <reaction evidence="1 2">
        <text>D-alanyl-D-alanine + H2O = 2 D-alanine</text>
        <dbReference type="Rhea" id="RHEA:20661"/>
        <dbReference type="ChEBI" id="CHEBI:15377"/>
        <dbReference type="ChEBI" id="CHEBI:57416"/>
        <dbReference type="ChEBI" id="CHEBI:57822"/>
        <dbReference type="EC" id="3.4.13.22"/>
    </reaction>
</comment>
<comment type="cofactor">
    <cofactor evidence="4">
        <name>Zn(2+)</name>
        <dbReference type="ChEBI" id="CHEBI:29105"/>
    </cofactor>
    <text evidence="4">Binds 1 zinc ion per subunit.</text>
</comment>
<comment type="biophysicochemical properties">
    <kinetics>
        <KM evidence="2">1.4 mM for D-Ala-D-Ala</KM>
        <KM evidence="2">550 mM for L-Ala-D-Ala</KM>
        <text>kcat is 170 sec(-1) with D-Ala-D-Ala. kcat is 70 sec(-1) with L-Ala-D-Ala.</text>
    </kinetics>
</comment>
<comment type="subcellular location">
    <subcellularLocation>
        <location evidence="4">Cytoplasm</location>
    </subcellularLocation>
</comment>
<comment type="similarity">
    <text evidence="1">Belongs to the peptidase M15D family.</text>
</comment>
<name>DDPX_ECOLI</name>
<proteinExistence type="evidence at protein level"/>
<organism>
    <name type="scientific">Escherichia coli (strain K12)</name>
    <dbReference type="NCBI Taxonomy" id="83333"/>
    <lineage>
        <taxon>Bacteria</taxon>
        <taxon>Pseudomonadati</taxon>
        <taxon>Pseudomonadota</taxon>
        <taxon>Gammaproteobacteria</taxon>
        <taxon>Enterobacterales</taxon>
        <taxon>Enterobacteriaceae</taxon>
        <taxon>Escherichia</taxon>
    </lineage>
</organism>
<reference key="1">
    <citation type="journal article" date="1996" name="DNA Res.">
        <title>A 570-kb DNA sequence of the Escherichia coli K-12 genome corresponding to the 28.0-40.1 min region on the linkage map.</title>
        <authorList>
            <person name="Aiba H."/>
            <person name="Baba T."/>
            <person name="Fujita K."/>
            <person name="Hayashi K."/>
            <person name="Inada T."/>
            <person name="Isono K."/>
            <person name="Itoh T."/>
            <person name="Kasai H."/>
            <person name="Kashimoto K."/>
            <person name="Kimura S."/>
            <person name="Kitakawa M."/>
            <person name="Kitagawa M."/>
            <person name="Makino K."/>
            <person name="Miki T."/>
            <person name="Mizobuchi K."/>
            <person name="Mori H."/>
            <person name="Mori T."/>
            <person name="Motomura K."/>
            <person name="Nakade S."/>
            <person name="Nakamura Y."/>
            <person name="Nashimoto H."/>
            <person name="Nishio Y."/>
            <person name="Oshima T."/>
            <person name="Saito N."/>
            <person name="Sampei G."/>
            <person name="Seki Y."/>
            <person name="Sivasundaram S."/>
            <person name="Tagami H."/>
            <person name="Takeda J."/>
            <person name="Takemoto K."/>
            <person name="Takeuchi Y."/>
            <person name="Wada C."/>
            <person name="Yamamoto Y."/>
            <person name="Horiuchi T."/>
        </authorList>
    </citation>
    <scope>NUCLEOTIDE SEQUENCE [LARGE SCALE GENOMIC DNA]</scope>
    <source>
        <strain>K12 / W3110 / ATCC 27325 / DSM 5911</strain>
    </source>
</reference>
<reference key="2">
    <citation type="journal article" date="1997" name="Science">
        <title>The complete genome sequence of Escherichia coli K-12.</title>
        <authorList>
            <person name="Blattner F.R."/>
            <person name="Plunkett G. III"/>
            <person name="Bloch C.A."/>
            <person name="Perna N.T."/>
            <person name="Burland V."/>
            <person name="Riley M."/>
            <person name="Collado-Vides J."/>
            <person name="Glasner J.D."/>
            <person name="Rode C.K."/>
            <person name="Mayhew G.F."/>
            <person name="Gregor J."/>
            <person name="Davis N.W."/>
            <person name="Kirkpatrick H.A."/>
            <person name="Goeden M.A."/>
            <person name="Rose D.J."/>
            <person name="Mau B."/>
            <person name="Shao Y."/>
        </authorList>
    </citation>
    <scope>NUCLEOTIDE SEQUENCE [LARGE SCALE GENOMIC DNA]</scope>
    <source>
        <strain>K12 / MG1655 / ATCC 47076</strain>
    </source>
</reference>
<reference key="3">
    <citation type="journal article" date="2006" name="Mol. Syst. Biol.">
        <title>Highly accurate genome sequences of Escherichia coli K-12 strains MG1655 and W3110.</title>
        <authorList>
            <person name="Hayashi K."/>
            <person name="Morooka N."/>
            <person name="Yamamoto Y."/>
            <person name="Fujita K."/>
            <person name="Isono K."/>
            <person name="Choi S."/>
            <person name="Ohtsubo E."/>
            <person name="Baba T."/>
            <person name="Wanner B.L."/>
            <person name="Mori H."/>
            <person name="Horiuchi T."/>
        </authorList>
    </citation>
    <scope>NUCLEOTIDE SEQUENCE [LARGE SCALE GENOMIC DNA]</scope>
    <source>
        <strain>K12 / W3110 / ATCC 27325 / DSM 5911</strain>
    </source>
</reference>
<reference key="4">
    <citation type="journal article" date="1998" name="Chem. Biol.">
        <title>Homologs of the vancomycin resistance D-Ala-D-Ala dipeptidase VanX in Streptomyces toyocaensis, Escherichia coli and Synechocystis: attributes of catalytic efficiency, stereoselectivity and regulation with implications for function.</title>
        <authorList>
            <person name="Lessard I.A.D."/>
            <person name="Pratt S.D."/>
            <person name="McCafferty D.G."/>
            <person name="Bussiere D.E."/>
            <person name="Hutchins C."/>
            <person name="Wanner B.L."/>
            <person name="Katz L."/>
            <person name="Walsh C.T."/>
        </authorList>
    </citation>
    <scope>FUNCTION</scope>
    <scope>CATALYTIC ACTIVITY</scope>
    <scope>COFACTOR</scope>
    <scope>BIOPHYSICOCHEMICAL PROPERTIES</scope>
    <scope>SUBCELLULAR LOCATION</scope>
</reference>
<keyword id="KW-0961">Cell wall biogenesis/degradation</keyword>
<keyword id="KW-0963">Cytoplasm</keyword>
<keyword id="KW-0224">Dipeptidase</keyword>
<keyword id="KW-0378">Hydrolase</keyword>
<keyword id="KW-0479">Metal-binding</keyword>
<keyword id="KW-0482">Metalloprotease</keyword>
<keyword id="KW-0645">Protease</keyword>
<keyword id="KW-1185">Reference proteome</keyword>
<keyword id="KW-0862">Zinc</keyword>
<sequence>MSDTTELVDLAVIFPDLEIELKYACADNITGKAIYQQARCLLHKDAITALAKSISIAQLSGLQLVIYDAYRPQQAQAMLWQACPDPQYVVDVTVGSNHSRGTAIDLTLRDEHGNILDMGAGFDEMHERSHAYHPSVPPAAQRNRLLLNAIMTGGGFVGISSEWWHFELPQAASYPLLADQFSCFISPGTQHVS</sequence>
<gene>
    <name evidence="1" type="primary">ddpX</name>
    <name evidence="3" type="synonym">vanX</name>
    <name type="synonym">yddT</name>
    <name type="ordered locus">b1488</name>
    <name type="ordered locus">JW1483</name>
</gene>
<evidence type="ECO:0000255" key="1">
    <source>
        <dbReference type="HAMAP-Rule" id="MF_01924"/>
    </source>
</evidence>
<evidence type="ECO:0000269" key="2">
    <source>
    </source>
</evidence>
<evidence type="ECO:0000303" key="3">
    <source>
    </source>
</evidence>
<evidence type="ECO:0000305" key="4">
    <source>
    </source>
</evidence>
<accession>P77790</accession>
<protein>
    <recommendedName>
        <fullName evidence="1">D-alanyl-D-alanine dipeptidase</fullName>
        <shortName evidence="1">D-Ala-D-Ala dipeptidase</shortName>
        <ecNumber evidence="1">3.4.13.22</ecNumber>
    </recommendedName>
</protein>